<keyword id="KW-0067">ATP-binding</keyword>
<keyword id="KW-0963">Cytoplasm</keyword>
<keyword id="KW-0418">Kinase</keyword>
<keyword id="KW-0547">Nucleotide-binding</keyword>
<keyword id="KW-0808">Transferase</keyword>
<feature type="chain" id="PRO_1000119018" description="Cytidylate kinase">
    <location>
        <begin position="1"/>
        <end position="227"/>
    </location>
</feature>
<feature type="binding site" evidence="1">
    <location>
        <begin position="12"/>
        <end position="20"/>
    </location>
    <ligand>
        <name>ATP</name>
        <dbReference type="ChEBI" id="CHEBI:30616"/>
    </ligand>
</feature>
<proteinExistence type="inferred from homology"/>
<protein>
    <recommendedName>
        <fullName evidence="1">Cytidylate kinase</fullName>
        <shortName evidence="1">CK</shortName>
        <ecNumber evidence="1">2.7.4.25</ecNumber>
    </recommendedName>
    <alternativeName>
        <fullName evidence="1">Cytidine monophosphate kinase</fullName>
        <shortName evidence="1">CMP kinase</shortName>
    </alternativeName>
</protein>
<reference key="1">
    <citation type="journal article" date="2009" name="PLoS Genet.">
        <title>Organised genome dynamics in the Escherichia coli species results in highly diverse adaptive paths.</title>
        <authorList>
            <person name="Touchon M."/>
            <person name="Hoede C."/>
            <person name="Tenaillon O."/>
            <person name="Barbe V."/>
            <person name="Baeriswyl S."/>
            <person name="Bidet P."/>
            <person name="Bingen E."/>
            <person name="Bonacorsi S."/>
            <person name="Bouchier C."/>
            <person name="Bouvet O."/>
            <person name="Calteau A."/>
            <person name="Chiapello H."/>
            <person name="Clermont O."/>
            <person name="Cruveiller S."/>
            <person name="Danchin A."/>
            <person name="Diard M."/>
            <person name="Dossat C."/>
            <person name="Karoui M.E."/>
            <person name="Frapy E."/>
            <person name="Garry L."/>
            <person name="Ghigo J.M."/>
            <person name="Gilles A.M."/>
            <person name="Johnson J."/>
            <person name="Le Bouguenec C."/>
            <person name="Lescat M."/>
            <person name="Mangenot S."/>
            <person name="Martinez-Jehanne V."/>
            <person name="Matic I."/>
            <person name="Nassif X."/>
            <person name="Oztas S."/>
            <person name="Petit M.A."/>
            <person name="Pichon C."/>
            <person name="Rouy Z."/>
            <person name="Ruf C.S."/>
            <person name="Schneider D."/>
            <person name="Tourret J."/>
            <person name="Vacherie B."/>
            <person name="Vallenet D."/>
            <person name="Medigue C."/>
            <person name="Rocha E.P.C."/>
            <person name="Denamur E."/>
        </authorList>
    </citation>
    <scope>NUCLEOTIDE SEQUENCE [LARGE SCALE GENOMIC DNA]</scope>
    <source>
        <strain>ATCC 35469 / DSM 13698 / BCRC 15582 / CCUG 18766 / IAM 14443 / JCM 21226 / LMG 7866 / NBRC 102419 / NCTC 12128 / CDC 0568-73</strain>
    </source>
</reference>
<comment type="catalytic activity">
    <reaction evidence="1">
        <text>CMP + ATP = CDP + ADP</text>
        <dbReference type="Rhea" id="RHEA:11600"/>
        <dbReference type="ChEBI" id="CHEBI:30616"/>
        <dbReference type="ChEBI" id="CHEBI:58069"/>
        <dbReference type="ChEBI" id="CHEBI:60377"/>
        <dbReference type="ChEBI" id="CHEBI:456216"/>
        <dbReference type="EC" id="2.7.4.25"/>
    </reaction>
</comment>
<comment type="catalytic activity">
    <reaction evidence="1">
        <text>dCMP + ATP = dCDP + ADP</text>
        <dbReference type="Rhea" id="RHEA:25094"/>
        <dbReference type="ChEBI" id="CHEBI:30616"/>
        <dbReference type="ChEBI" id="CHEBI:57566"/>
        <dbReference type="ChEBI" id="CHEBI:58593"/>
        <dbReference type="ChEBI" id="CHEBI:456216"/>
        <dbReference type="EC" id="2.7.4.25"/>
    </reaction>
</comment>
<comment type="subcellular location">
    <subcellularLocation>
        <location evidence="1">Cytoplasm</location>
    </subcellularLocation>
</comment>
<comment type="similarity">
    <text evidence="1">Belongs to the cytidylate kinase family. Type 1 subfamily.</text>
</comment>
<dbReference type="EC" id="2.7.4.25" evidence="1"/>
<dbReference type="EMBL" id="CU928158">
    <property type="protein sequence ID" value="CAQ88583.1"/>
    <property type="molecule type" value="Genomic_DNA"/>
</dbReference>
<dbReference type="RefSeq" id="WP_000125009.1">
    <property type="nucleotide sequence ID" value="NC_011740.1"/>
</dbReference>
<dbReference type="SMR" id="B7LN72"/>
<dbReference type="GeneID" id="75057895"/>
<dbReference type="KEGG" id="efe:EFER_1054"/>
<dbReference type="HOGENOM" id="CLU_079959_0_2_6"/>
<dbReference type="OrthoDB" id="9807434at2"/>
<dbReference type="Proteomes" id="UP000000745">
    <property type="component" value="Chromosome"/>
</dbReference>
<dbReference type="GO" id="GO:0005829">
    <property type="term" value="C:cytosol"/>
    <property type="evidence" value="ECO:0007669"/>
    <property type="project" value="TreeGrafter"/>
</dbReference>
<dbReference type="GO" id="GO:0005524">
    <property type="term" value="F:ATP binding"/>
    <property type="evidence" value="ECO:0007669"/>
    <property type="project" value="UniProtKB-UniRule"/>
</dbReference>
<dbReference type="GO" id="GO:0036430">
    <property type="term" value="F:CMP kinase activity"/>
    <property type="evidence" value="ECO:0007669"/>
    <property type="project" value="RHEA"/>
</dbReference>
<dbReference type="GO" id="GO:0036431">
    <property type="term" value="F:dCMP kinase activity"/>
    <property type="evidence" value="ECO:0007669"/>
    <property type="project" value="RHEA"/>
</dbReference>
<dbReference type="GO" id="GO:0015949">
    <property type="term" value="P:nucleobase-containing small molecule interconversion"/>
    <property type="evidence" value="ECO:0007669"/>
    <property type="project" value="TreeGrafter"/>
</dbReference>
<dbReference type="GO" id="GO:0006220">
    <property type="term" value="P:pyrimidine nucleotide metabolic process"/>
    <property type="evidence" value="ECO:0007669"/>
    <property type="project" value="UniProtKB-UniRule"/>
</dbReference>
<dbReference type="CDD" id="cd02020">
    <property type="entry name" value="CMPK"/>
    <property type="match status" value="1"/>
</dbReference>
<dbReference type="FunFam" id="3.40.50.300:FF:000262">
    <property type="entry name" value="Cytidylate kinase"/>
    <property type="match status" value="1"/>
</dbReference>
<dbReference type="Gene3D" id="3.40.50.300">
    <property type="entry name" value="P-loop containing nucleotide triphosphate hydrolases"/>
    <property type="match status" value="1"/>
</dbReference>
<dbReference type="HAMAP" id="MF_00238">
    <property type="entry name" value="Cytidyl_kinase_type1"/>
    <property type="match status" value="1"/>
</dbReference>
<dbReference type="InterPro" id="IPR003136">
    <property type="entry name" value="Cytidylate_kin"/>
</dbReference>
<dbReference type="InterPro" id="IPR011994">
    <property type="entry name" value="Cytidylate_kinase_dom"/>
</dbReference>
<dbReference type="InterPro" id="IPR027417">
    <property type="entry name" value="P-loop_NTPase"/>
</dbReference>
<dbReference type="NCBIfam" id="TIGR00017">
    <property type="entry name" value="cmk"/>
    <property type="match status" value="1"/>
</dbReference>
<dbReference type="PANTHER" id="PTHR21299:SF2">
    <property type="entry name" value="CYTIDYLATE KINASE"/>
    <property type="match status" value="1"/>
</dbReference>
<dbReference type="PANTHER" id="PTHR21299">
    <property type="entry name" value="CYTIDYLATE KINASE/PANTOATE-BETA-ALANINE LIGASE"/>
    <property type="match status" value="1"/>
</dbReference>
<dbReference type="Pfam" id="PF02224">
    <property type="entry name" value="Cytidylate_kin"/>
    <property type="match status" value="1"/>
</dbReference>
<dbReference type="SUPFAM" id="SSF52540">
    <property type="entry name" value="P-loop containing nucleoside triphosphate hydrolases"/>
    <property type="match status" value="1"/>
</dbReference>
<sequence>MTAIAPVITIDGPSGAGKGTLCKAMAEALQWHLLDSGAIYRVLALAALHHHVDVASEDALVPLASHLDVRFISTNGNLEVILEGEDVSGEIRTQEVANAASQVAAFPRVREALLRRQRAFRELPGLIADGRDMGTVVFPDAPVKIFLDASSEERAHRRMLQLQEKGFSVNFERLLAEIKERDDRDRNRAVAPLVPAADALVLDSTTLSIEQVIEKALQYARQKLALA</sequence>
<evidence type="ECO:0000255" key="1">
    <source>
        <dbReference type="HAMAP-Rule" id="MF_00238"/>
    </source>
</evidence>
<organism>
    <name type="scientific">Escherichia fergusonii (strain ATCC 35469 / DSM 13698 / CCUG 18766 / IAM 14443 / JCM 21226 / LMG 7866 / NBRC 102419 / NCTC 12128 / CDC 0568-73)</name>
    <dbReference type="NCBI Taxonomy" id="585054"/>
    <lineage>
        <taxon>Bacteria</taxon>
        <taxon>Pseudomonadati</taxon>
        <taxon>Pseudomonadota</taxon>
        <taxon>Gammaproteobacteria</taxon>
        <taxon>Enterobacterales</taxon>
        <taxon>Enterobacteriaceae</taxon>
        <taxon>Escherichia</taxon>
    </lineage>
</organism>
<gene>
    <name evidence="1" type="primary">cmk</name>
    <name type="ordered locus">EFER_1054</name>
</gene>
<accession>B7LN72</accession>
<name>KCY_ESCF3</name>